<evidence type="ECO:0000255" key="1">
    <source>
        <dbReference type="HAMAP-Rule" id="MF_01010"/>
    </source>
</evidence>
<feature type="chain" id="PRO_1000200842" description="23S rRNA (uracil(1939)-C(5))-methyltransferase RlmD">
    <location>
        <begin position="1"/>
        <end position="431"/>
    </location>
</feature>
<feature type="domain" description="TRAM" evidence="1">
    <location>
        <begin position="8"/>
        <end position="68"/>
    </location>
</feature>
<feature type="active site" description="Nucleophile" evidence="1">
    <location>
        <position position="389"/>
    </location>
</feature>
<feature type="binding site" evidence="1">
    <location>
        <position position="81"/>
    </location>
    <ligand>
        <name>[4Fe-4S] cluster</name>
        <dbReference type="ChEBI" id="CHEBI:49883"/>
    </ligand>
</feature>
<feature type="binding site" evidence="1">
    <location>
        <position position="87"/>
    </location>
    <ligand>
        <name>[4Fe-4S] cluster</name>
        <dbReference type="ChEBI" id="CHEBI:49883"/>
    </ligand>
</feature>
<feature type="binding site" evidence="1">
    <location>
        <position position="90"/>
    </location>
    <ligand>
        <name>[4Fe-4S] cluster</name>
        <dbReference type="ChEBI" id="CHEBI:49883"/>
    </ligand>
</feature>
<feature type="binding site" evidence="1">
    <location>
        <position position="162"/>
    </location>
    <ligand>
        <name>[4Fe-4S] cluster</name>
        <dbReference type="ChEBI" id="CHEBI:49883"/>
    </ligand>
</feature>
<feature type="binding site" evidence="1">
    <location>
        <position position="265"/>
    </location>
    <ligand>
        <name>S-adenosyl-L-methionine</name>
        <dbReference type="ChEBI" id="CHEBI:59789"/>
    </ligand>
</feature>
<feature type="binding site" evidence="1">
    <location>
        <position position="294"/>
    </location>
    <ligand>
        <name>S-adenosyl-L-methionine</name>
        <dbReference type="ChEBI" id="CHEBI:59789"/>
    </ligand>
</feature>
<feature type="binding site" evidence="1">
    <location>
        <position position="299"/>
    </location>
    <ligand>
        <name>S-adenosyl-L-methionine</name>
        <dbReference type="ChEBI" id="CHEBI:59789"/>
    </ligand>
</feature>
<feature type="binding site" evidence="1">
    <location>
        <position position="315"/>
    </location>
    <ligand>
        <name>S-adenosyl-L-methionine</name>
        <dbReference type="ChEBI" id="CHEBI:59789"/>
    </ligand>
</feature>
<feature type="binding site" evidence="1">
    <location>
        <position position="342"/>
    </location>
    <ligand>
        <name>S-adenosyl-L-methionine</name>
        <dbReference type="ChEBI" id="CHEBI:59789"/>
    </ligand>
</feature>
<feature type="binding site" evidence="1">
    <location>
        <position position="363"/>
    </location>
    <ligand>
        <name>S-adenosyl-L-methionine</name>
        <dbReference type="ChEBI" id="CHEBI:59789"/>
    </ligand>
</feature>
<reference key="1">
    <citation type="journal article" date="2010" name="PLoS Genet.">
        <title>Genome sequence of the plant growth promoting endophytic bacterium Enterobacter sp. 638.</title>
        <authorList>
            <person name="Taghavi S."/>
            <person name="van der Lelie D."/>
            <person name="Hoffman A."/>
            <person name="Zhang Y.B."/>
            <person name="Walla M.D."/>
            <person name="Vangronsveld J."/>
            <person name="Newman L."/>
            <person name="Monchy S."/>
        </authorList>
    </citation>
    <scope>NUCLEOTIDE SEQUENCE [LARGE SCALE GENOMIC DNA]</scope>
    <source>
        <strain>638</strain>
    </source>
</reference>
<organism>
    <name type="scientific">Enterobacter sp. (strain 638)</name>
    <dbReference type="NCBI Taxonomy" id="399742"/>
    <lineage>
        <taxon>Bacteria</taxon>
        <taxon>Pseudomonadati</taxon>
        <taxon>Pseudomonadota</taxon>
        <taxon>Gammaproteobacteria</taxon>
        <taxon>Enterobacterales</taxon>
        <taxon>Enterobacteriaceae</taxon>
        <taxon>Enterobacter</taxon>
    </lineage>
</organism>
<accession>A4WDX1</accession>
<name>RLMD_ENT38</name>
<sequence>MAQFYSAKRRVTTRQIITVEATDLDPFGQGVARHNGKALFIPGLLPNERAEVTLTEDKSKYSRGQVKRRLNDSPERVAPRCPHFGVCGGCQQQHASVALQQSSKSTALARLMKHEVNEIISGEPWGYRRRARLSLSYEPKTQKLAMGFRKAASSDIVDVKQCPVLVPHLEALLPHLRNCLSDLQGARALGHVELVLADNGPLMVLRHTAPLSAPDREKLERFSHSHELTLFLAPQSEILERVSGDDPWYLSDGLRLTFSPRDFIQVNDGVNQQMVAKAIEWLDVQPDDRVLDLFCGMGNFTLPLAQRAASVVGVEGVNALVEKGQQNAHHNALDNVTFFHENLEEDVTQQPWAQHGFDKVLLDPARAGAPGVMQHIIKLAPKRVVYVSCNPATLARDSEALLSAGYQIQRLAMLDMFPHTGHLESMVLFQL</sequence>
<protein>
    <recommendedName>
        <fullName evidence="1">23S rRNA (uracil(1939)-C(5))-methyltransferase RlmD</fullName>
        <ecNumber evidence="1">2.1.1.190</ecNumber>
    </recommendedName>
    <alternativeName>
        <fullName evidence="1">23S rRNA(m5U1939)-methyltransferase</fullName>
    </alternativeName>
</protein>
<gene>
    <name evidence="1" type="primary">rlmD</name>
    <name type="synonym">rumA</name>
    <name type="ordered locus">Ent638_3237</name>
</gene>
<keyword id="KW-0004">4Fe-4S</keyword>
<keyword id="KW-0408">Iron</keyword>
<keyword id="KW-0411">Iron-sulfur</keyword>
<keyword id="KW-0479">Metal-binding</keyword>
<keyword id="KW-0489">Methyltransferase</keyword>
<keyword id="KW-0698">rRNA processing</keyword>
<keyword id="KW-0949">S-adenosyl-L-methionine</keyword>
<keyword id="KW-0808">Transferase</keyword>
<comment type="function">
    <text evidence="1">Catalyzes the formation of 5-methyl-uridine at position 1939 (m5U1939) in 23S rRNA.</text>
</comment>
<comment type="catalytic activity">
    <reaction evidence="1">
        <text>uridine(1939) in 23S rRNA + S-adenosyl-L-methionine = 5-methyluridine(1939) in 23S rRNA + S-adenosyl-L-homocysteine + H(+)</text>
        <dbReference type="Rhea" id="RHEA:42908"/>
        <dbReference type="Rhea" id="RHEA-COMP:10278"/>
        <dbReference type="Rhea" id="RHEA-COMP:10279"/>
        <dbReference type="ChEBI" id="CHEBI:15378"/>
        <dbReference type="ChEBI" id="CHEBI:57856"/>
        <dbReference type="ChEBI" id="CHEBI:59789"/>
        <dbReference type="ChEBI" id="CHEBI:65315"/>
        <dbReference type="ChEBI" id="CHEBI:74447"/>
        <dbReference type="EC" id="2.1.1.190"/>
    </reaction>
</comment>
<comment type="similarity">
    <text evidence="1">Belongs to the class I-like SAM-binding methyltransferase superfamily. RNA M5U methyltransferase family. RlmD subfamily.</text>
</comment>
<proteinExistence type="inferred from homology"/>
<dbReference type="EC" id="2.1.1.190" evidence="1"/>
<dbReference type="EMBL" id="CP000653">
    <property type="protein sequence ID" value="ABP61901.1"/>
    <property type="molecule type" value="Genomic_DNA"/>
</dbReference>
<dbReference type="RefSeq" id="WP_015960230.1">
    <property type="nucleotide sequence ID" value="NC_009436.1"/>
</dbReference>
<dbReference type="SMR" id="A4WDX1"/>
<dbReference type="STRING" id="399742.Ent638_3237"/>
<dbReference type="KEGG" id="ent:Ent638_3237"/>
<dbReference type="eggNOG" id="COG2265">
    <property type="taxonomic scope" value="Bacteria"/>
</dbReference>
<dbReference type="HOGENOM" id="CLU_014689_8_2_6"/>
<dbReference type="OrthoDB" id="9804590at2"/>
<dbReference type="Proteomes" id="UP000000230">
    <property type="component" value="Chromosome"/>
</dbReference>
<dbReference type="GO" id="GO:0051539">
    <property type="term" value="F:4 iron, 4 sulfur cluster binding"/>
    <property type="evidence" value="ECO:0007669"/>
    <property type="project" value="UniProtKB-KW"/>
</dbReference>
<dbReference type="GO" id="GO:0005506">
    <property type="term" value="F:iron ion binding"/>
    <property type="evidence" value="ECO:0007669"/>
    <property type="project" value="UniProtKB-UniRule"/>
</dbReference>
<dbReference type="GO" id="GO:0003723">
    <property type="term" value="F:RNA binding"/>
    <property type="evidence" value="ECO:0007669"/>
    <property type="project" value="InterPro"/>
</dbReference>
<dbReference type="GO" id="GO:0070041">
    <property type="term" value="F:rRNA (uridine-C5-)-methyltransferase activity"/>
    <property type="evidence" value="ECO:0007669"/>
    <property type="project" value="UniProtKB-UniRule"/>
</dbReference>
<dbReference type="GO" id="GO:0070475">
    <property type="term" value="P:rRNA base methylation"/>
    <property type="evidence" value="ECO:0007669"/>
    <property type="project" value="TreeGrafter"/>
</dbReference>
<dbReference type="CDD" id="cd02440">
    <property type="entry name" value="AdoMet_MTases"/>
    <property type="match status" value="1"/>
</dbReference>
<dbReference type="FunFam" id="3.40.50.150:FF:000009">
    <property type="entry name" value="23S rRNA (Uracil(1939)-C(5))-methyltransferase RlmD"/>
    <property type="match status" value="1"/>
</dbReference>
<dbReference type="FunFam" id="2.40.50.1070:FF:000004">
    <property type="entry name" value="23S rRNA (uracil(1939)-C(5))-methyltransferase RlmD"/>
    <property type="match status" value="1"/>
</dbReference>
<dbReference type="FunFam" id="2.40.50.140:FF:000097">
    <property type="entry name" value="23S rRNA (uracil(1939)-C(5))-methyltransferase RlmD"/>
    <property type="match status" value="1"/>
</dbReference>
<dbReference type="Gene3D" id="2.40.50.1070">
    <property type="match status" value="1"/>
</dbReference>
<dbReference type="Gene3D" id="2.40.50.140">
    <property type="entry name" value="Nucleic acid-binding proteins"/>
    <property type="match status" value="1"/>
</dbReference>
<dbReference type="Gene3D" id="3.40.50.150">
    <property type="entry name" value="Vaccinia Virus protein VP39"/>
    <property type="match status" value="1"/>
</dbReference>
<dbReference type="HAMAP" id="MF_01010">
    <property type="entry name" value="23SrRNA_methyltr_RlmD"/>
    <property type="match status" value="1"/>
</dbReference>
<dbReference type="InterPro" id="IPR001566">
    <property type="entry name" value="23S_rRNA_MeTrfase_RlmD"/>
</dbReference>
<dbReference type="InterPro" id="IPR030390">
    <property type="entry name" value="MeTrfase_TrmA_AS"/>
</dbReference>
<dbReference type="InterPro" id="IPR030391">
    <property type="entry name" value="MeTrfase_TrmA_CS"/>
</dbReference>
<dbReference type="InterPro" id="IPR012340">
    <property type="entry name" value="NA-bd_OB-fold"/>
</dbReference>
<dbReference type="InterPro" id="IPR029063">
    <property type="entry name" value="SAM-dependent_MTases_sf"/>
</dbReference>
<dbReference type="InterPro" id="IPR002792">
    <property type="entry name" value="TRAM_dom"/>
</dbReference>
<dbReference type="InterPro" id="IPR010280">
    <property type="entry name" value="U5_MeTrfase_fam"/>
</dbReference>
<dbReference type="NCBIfam" id="NF009639">
    <property type="entry name" value="PRK13168.1"/>
    <property type="match status" value="1"/>
</dbReference>
<dbReference type="NCBIfam" id="TIGR00479">
    <property type="entry name" value="rumA"/>
    <property type="match status" value="1"/>
</dbReference>
<dbReference type="PANTHER" id="PTHR11061:SF49">
    <property type="entry name" value="23S RRNA (URACIL(1939)-C(5))-METHYLTRANSFERASE RLMD"/>
    <property type="match status" value="1"/>
</dbReference>
<dbReference type="PANTHER" id="PTHR11061">
    <property type="entry name" value="RNA M5U METHYLTRANSFERASE"/>
    <property type="match status" value="1"/>
</dbReference>
<dbReference type="Pfam" id="PF01938">
    <property type="entry name" value="TRAM"/>
    <property type="match status" value="1"/>
</dbReference>
<dbReference type="Pfam" id="PF05958">
    <property type="entry name" value="tRNA_U5-meth_tr"/>
    <property type="match status" value="1"/>
</dbReference>
<dbReference type="SUPFAM" id="SSF50249">
    <property type="entry name" value="Nucleic acid-binding proteins"/>
    <property type="match status" value="1"/>
</dbReference>
<dbReference type="SUPFAM" id="SSF53335">
    <property type="entry name" value="S-adenosyl-L-methionine-dependent methyltransferases"/>
    <property type="match status" value="1"/>
</dbReference>
<dbReference type="PROSITE" id="PS51687">
    <property type="entry name" value="SAM_MT_RNA_M5U"/>
    <property type="match status" value="1"/>
</dbReference>
<dbReference type="PROSITE" id="PS50926">
    <property type="entry name" value="TRAM"/>
    <property type="match status" value="1"/>
</dbReference>
<dbReference type="PROSITE" id="PS01230">
    <property type="entry name" value="TRMA_1"/>
    <property type="match status" value="1"/>
</dbReference>
<dbReference type="PROSITE" id="PS01231">
    <property type="entry name" value="TRMA_2"/>
    <property type="match status" value="1"/>
</dbReference>